<keyword id="KW-0028">Amino-acid biosynthesis</keyword>
<keyword id="KW-0100">Branched-chain amino acid biosynthesis</keyword>
<keyword id="KW-0428">Leader peptide</keyword>
<keyword id="KW-0432">Leucine biosynthesis</keyword>
<keyword id="KW-0614">Plasmid</keyword>
<gene>
    <name type="primary">leuL</name>
    <name type="synonym">leuO</name>
</gene>
<reference key="1">
    <citation type="journal article" date="1995" name="J. Mol. Evol.">
        <title>Discovery and molecular characterization of a plasmid localized in Buchnera sp. bacterial endosymbiont of the aphid Rhopalosiphum padi.</title>
        <authorList>
            <person name="Bracho A.M."/>
            <person name="Martinez-Torres D."/>
            <person name="Moya A."/>
            <person name="Latorre A."/>
        </authorList>
    </citation>
    <scope>NUCLEOTIDE SEQUENCE [GENOMIC DNA]</scope>
</reference>
<feature type="peptide" id="PRO_0000044762" description="leu operon leader peptide">
    <location>
        <begin position="1"/>
        <end position="31"/>
    </location>
</feature>
<geneLocation type="plasmid">
    <name>pRPE</name>
</geneLocation>
<dbReference type="EMBL" id="X71612">
    <property type="protein sequence ID" value="CAA50613.1"/>
    <property type="molecule type" value="Genomic_DNA"/>
</dbReference>
<dbReference type="GO" id="GO:0009098">
    <property type="term" value="P:L-leucine biosynthetic process"/>
    <property type="evidence" value="ECO:0007669"/>
    <property type="project" value="UniProtKB-KW"/>
</dbReference>
<organism>
    <name type="scientific">Buchnera aphidicola subsp. Rhopalosiphum padi</name>
    <dbReference type="NCBI Taxonomy" id="98793"/>
    <lineage>
        <taxon>Bacteria</taxon>
        <taxon>Pseudomonadati</taxon>
        <taxon>Pseudomonadota</taxon>
        <taxon>Gammaproteobacteria</taxon>
        <taxon>Enterobacterales</taxon>
        <taxon>Erwiniaceae</taxon>
        <taxon>Buchnera</taxon>
    </lineage>
</organism>
<protein>
    <recommendedName>
        <fullName>leu operon leader peptide</fullName>
    </recommendedName>
    <alternativeName>
        <fullName>leu operon attenuator peptide</fullName>
    </alternativeName>
</protein>
<sequence length="31" mass="3920">MLIQLKIKLLLLLLLYLLYIFYVFLWKQSEF</sequence>
<proteinExistence type="predicted"/>
<accession>Q53017</accession>
<comment type="function">
    <text>Involved in control of the biosynthesis of leucine.</text>
</comment>
<name>LPL_BUCRP</name>